<sequence length="317" mass="36034">MIIMKLIFLGTGAAVPSKNRNHIGIAFKFGGEVFLFDCGENIQRQMLFTEVSPMKINHIFITHLHGDHILGIPGLLQSMGFFGREKELKIFGPEGTKEIIENSLKLGTHYIEFPIKVYEIYTKEPITIYKEENYEIIAYPTEHGIPSYAYIFKEIKKPRLDIEKAKKLGVKIGPDLKKLKNGEAVKNIYGEIIKPEYVLLPPKKGFCLAYSGDTLPLEDFGKYLKELGCDVLIHEATFDDSAKDAAKENMHSTIGDAVNIAKLANVKALILTHISARYDKEEYFNLYKMNVKQYNESFKIIISEDLKSYDIKKDLLG</sequence>
<accession>Q58897</accession>
<proteinExistence type="evidence at protein level"/>
<feature type="chain" id="PRO_0000155924" description="Ribonuclease Z">
    <location>
        <begin position="1"/>
        <end position="317"/>
    </location>
</feature>
<feature type="active site" description="Proton acceptor" evidence="1">
    <location>
        <position position="67"/>
    </location>
</feature>
<feature type="binding site" evidence="1">
    <location>
        <position position="63"/>
    </location>
    <ligand>
        <name>Zn(2+)</name>
        <dbReference type="ChEBI" id="CHEBI:29105"/>
        <label>1</label>
        <note>catalytic</note>
    </ligand>
</feature>
<feature type="binding site" evidence="1">
    <location>
        <position position="65"/>
    </location>
    <ligand>
        <name>Zn(2+)</name>
        <dbReference type="ChEBI" id="CHEBI:29105"/>
        <label>1</label>
        <note>catalytic</note>
    </ligand>
</feature>
<feature type="binding site" evidence="1">
    <location>
        <position position="67"/>
    </location>
    <ligand>
        <name>Zn(2+)</name>
        <dbReference type="ChEBI" id="CHEBI:29105"/>
        <label>2</label>
        <note>catalytic</note>
    </ligand>
</feature>
<feature type="binding site" evidence="1">
    <location>
        <position position="68"/>
    </location>
    <ligand>
        <name>Zn(2+)</name>
        <dbReference type="ChEBI" id="CHEBI:29105"/>
        <label>2</label>
        <note>catalytic</note>
    </ligand>
</feature>
<feature type="binding site" evidence="1">
    <location>
        <position position="143"/>
    </location>
    <ligand>
        <name>Zn(2+)</name>
        <dbReference type="ChEBI" id="CHEBI:29105"/>
        <label>1</label>
        <note>catalytic</note>
    </ligand>
</feature>
<feature type="binding site" evidence="1">
    <location>
        <position position="213"/>
    </location>
    <ligand>
        <name>Zn(2+)</name>
        <dbReference type="ChEBI" id="CHEBI:29105"/>
        <label>1</label>
        <note>catalytic</note>
    </ligand>
</feature>
<feature type="binding site" evidence="1">
    <location>
        <position position="213"/>
    </location>
    <ligand>
        <name>Zn(2+)</name>
        <dbReference type="ChEBI" id="CHEBI:29105"/>
        <label>2</label>
        <note>catalytic</note>
    </ligand>
</feature>
<feature type="binding site" evidence="1">
    <location>
        <position position="273"/>
    </location>
    <ligand>
        <name>Zn(2+)</name>
        <dbReference type="ChEBI" id="CHEBI:29105"/>
        <label>2</label>
        <note>catalytic</note>
    </ligand>
</feature>
<gene>
    <name evidence="1" type="primary">rnz</name>
    <name type="ordered locus">MJ1502</name>
</gene>
<comment type="function">
    <text evidence="1 2">Zinc phosphodiesterase, which displays some tRNA 3'-processing endonuclease activity. Probably involved in tRNA maturation, by removing a 3'-trailer from precursor tRNA.</text>
</comment>
<comment type="catalytic activity">
    <reaction evidence="1 2">
        <text>Endonucleolytic cleavage of RNA, removing extra 3' nucleotides from tRNA precursor, generating 3' termini of tRNAs. A 3'-hydroxy group is left at the tRNA terminus and a 5'-phosphoryl group is left at the trailer molecule.</text>
        <dbReference type="EC" id="3.1.26.11"/>
    </reaction>
</comment>
<comment type="cofactor">
    <cofactor evidence="1">
        <name>Zn(2+)</name>
        <dbReference type="ChEBI" id="CHEBI:29105"/>
    </cofactor>
    <text evidence="1">Binds 2 Zn(2+) ions.</text>
</comment>
<comment type="subunit">
    <text evidence="1">Homodimer.</text>
</comment>
<comment type="similarity">
    <text evidence="1">Belongs to the RNase Z family.</text>
</comment>
<comment type="sequence caution" evidence="3">
    <conflict type="erroneous initiation">
        <sequence resource="EMBL-CDS" id="AAB99515"/>
    </conflict>
    <text>Extended N-terminus.</text>
</comment>
<organism>
    <name type="scientific">Methanocaldococcus jannaschii (strain ATCC 43067 / DSM 2661 / JAL-1 / JCM 10045 / NBRC 100440)</name>
    <name type="common">Methanococcus jannaschii</name>
    <dbReference type="NCBI Taxonomy" id="243232"/>
    <lineage>
        <taxon>Archaea</taxon>
        <taxon>Methanobacteriati</taxon>
        <taxon>Methanobacteriota</taxon>
        <taxon>Methanomada group</taxon>
        <taxon>Methanococci</taxon>
        <taxon>Methanococcales</taxon>
        <taxon>Methanocaldococcaceae</taxon>
        <taxon>Methanocaldococcus</taxon>
    </lineage>
</organism>
<name>RNZ_METJA</name>
<keyword id="KW-0255">Endonuclease</keyword>
<keyword id="KW-0378">Hydrolase</keyword>
<keyword id="KW-0479">Metal-binding</keyword>
<keyword id="KW-0540">Nuclease</keyword>
<keyword id="KW-1185">Reference proteome</keyword>
<keyword id="KW-0819">tRNA processing</keyword>
<keyword id="KW-0862">Zinc</keyword>
<dbReference type="EC" id="3.1.26.11" evidence="1"/>
<dbReference type="EMBL" id="L77117">
    <property type="protein sequence ID" value="AAB99515.1"/>
    <property type="status" value="ALT_INIT"/>
    <property type="molecule type" value="Genomic_DNA"/>
</dbReference>
<dbReference type="PIR" id="E64487">
    <property type="entry name" value="E64487"/>
</dbReference>
<dbReference type="SMR" id="Q58897"/>
<dbReference type="FunCoup" id="Q58897">
    <property type="interactions" value="143"/>
</dbReference>
<dbReference type="STRING" id="243232.MJ_1502"/>
<dbReference type="PaxDb" id="243232-MJ_1502"/>
<dbReference type="EnsemblBacteria" id="AAB99515">
    <property type="protein sequence ID" value="AAB99515"/>
    <property type="gene ID" value="MJ_1502"/>
</dbReference>
<dbReference type="KEGG" id="mja:MJ_1502"/>
<dbReference type="eggNOG" id="arCOG00501">
    <property type="taxonomic scope" value="Archaea"/>
</dbReference>
<dbReference type="HOGENOM" id="CLU_031317_2_1_2"/>
<dbReference type="InParanoid" id="Q58897"/>
<dbReference type="PhylomeDB" id="Q58897"/>
<dbReference type="BRENDA" id="3.1.26.11">
    <property type="organism ID" value="3260"/>
</dbReference>
<dbReference type="Proteomes" id="UP000000805">
    <property type="component" value="Chromosome"/>
</dbReference>
<dbReference type="GO" id="GO:0042781">
    <property type="term" value="F:3'-tRNA processing endoribonuclease activity"/>
    <property type="evidence" value="ECO:0000318"/>
    <property type="project" value="GO_Central"/>
</dbReference>
<dbReference type="GO" id="GO:0008270">
    <property type="term" value="F:zinc ion binding"/>
    <property type="evidence" value="ECO:0007669"/>
    <property type="project" value="UniProtKB-UniRule"/>
</dbReference>
<dbReference type="CDD" id="cd07717">
    <property type="entry name" value="RNaseZ_ZiPD-like_MBL-fold"/>
    <property type="match status" value="1"/>
</dbReference>
<dbReference type="FunFam" id="3.60.15.10:FF:000002">
    <property type="entry name" value="Ribonuclease Z"/>
    <property type="match status" value="1"/>
</dbReference>
<dbReference type="Gene3D" id="3.60.15.10">
    <property type="entry name" value="Ribonuclease Z/Hydroxyacylglutathione hydrolase-like"/>
    <property type="match status" value="1"/>
</dbReference>
<dbReference type="HAMAP" id="MF_01818">
    <property type="entry name" value="RNase_Z_BN"/>
    <property type="match status" value="1"/>
</dbReference>
<dbReference type="InterPro" id="IPR001279">
    <property type="entry name" value="Metallo-B-lactamas"/>
</dbReference>
<dbReference type="InterPro" id="IPR036866">
    <property type="entry name" value="RibonucZ/Hydroxyglut_hydro"/>
</dbReference>
<dbReference type="InterPro" id="IPR013471">
    <property type="entry name" value="RNase_Z/BN"/>
</dbReference>
<dbReference type="NCBIfam" id="NF000801">
    <property type="entry name" value="PRK00055.1-3"/>
    <property type="match status" value="1"/>
</dbReference>
<dbReference type="NCBIfam" id="TIGR02651">
    <property type="entry name" value="RNase_Z"/>
    <property type="match status" value="1"/>
</dbReference>
<dbReference type="PANTHER" id="PTHR46018">
    <property type="entry name" value="ZINC PHOSPHODIESTERASE ELAC PROTEIN 1"/>
    <property type="match status" value="1"/>
</dbReference>
<dbReference type="PANTHER" id="PTHR46018:SF2">
    <property type="entry name" value="ZINC PHOSPHODIESTERASE ELAC PROTEIN 1"/>
    <property type="match status" value="1"/>
</dbReference>
<dbReference type="Pfam" id="PF12706">
    <property type="entry name" value="Lactamase_B_2"/>
    <property type="match status" value="1"/>
</dbReference>
<dbReference type="SMART" id="SM00849">
    <property type="entry name" value="Lactamase_B"/>
    <property type="match status" value="1"/>
</dbReference>
<dbReference type="SUPFAM" id="SSF56281">
    <property type="entry name" value="Metallo-hydrolase/oxidoreductase"/>
    <property type="match status" value="1"/>
</dbReference>
<reference key="1">
    <citation type="journal article" date="1996" name="Science">
        <title>Complete genome sequence of the methanogenic archaeon, Methanococcus jannaschii.</title>
        <authorList>
            <person name="Bult C.J."/>
            <person name="White O."/>
            <person name="Olsen G.J."/>
            <person name="Zhou L."/>
            <person name="Fleischmann R.D."/>
            <person name="Sutton G.G."/>
            <person name="Blake J.A."/>
            <person name="FitzGerald L.M."/>
            <person name="Clayton R.A."/>
            <person name="Gocayne J.D."/>
            <person name="Kerlavage A.R."/>
            <person name="Dougherty B.A."/>
            <person name="Tomb J.-F."/>
            <person name="Adams M.D."/>
            <person name="Reich C.I."/>
            <person name="Overbeek R."/>
            <person name="Kirkness E.F."/>
            <person name="Weinstock K.G."/>
            <person name="Merrick J.M."/>
            <person name="Glodek A."/>
            <person name="Scott J.L."/>
            <person name="Geoghagen N.S.M."/>
            <person name="Weidman J.F."/>
            <person name="Fuhrmann J.L."/>
            <person name="Nguyen D."/>
            <person name="Utterback T.R."/>
            <person name="Kelley J.M."/>
            <person name="Peterson J.D."/>
            <person name="Sadow P.W."/>
            <person name="Hanna M.C."/>
            <person name="Cotton M.D."/>
            <person name="Roberts K.M."/>
            <person name="Hurst M.A."/>
            <person name="Kaine B.P."/>
            <person name="Borodovsky M."/>
            <person name="Klenk H.-P."/>
            <person name="Fraser C.M."/>
            <person name="Smith H.O."/>
            <person name="Woese C.R."/>
            <person name="Venter J.C."/>
        </authorList>
    </citation>
    <scope>NUCLEOTIDE SEQUENCE [LARGE SCALE GENOMIC DNA]</scope>
    <source>
        <strain>ATCC 43067 / DSM 2661 / JAL-1 / JCM 10045 / NBRC 100440</strain>
    </source>
</reference>
<reference key="2">
    <citation type="journal article" date="2002" name="EMBO J.">
        <title>Assigning a function to a conserved group of proteins: the tRNA 3' - processing enzymes.</title>
        <authorList>
            <person name="Schiffer S."/>
            <person name="Roesch S."/>
            <person name="Marchfelder A."/>
        </authorList>
    </citation>
    <scope>FUNCTION</scope>
    <scope>CATALYTIC ACTIVITY</scope>
</reference>
<evidence type="ECO:0000255" key="1">
    <source>
        <dbReference type="HAMAP-Rule" id="MF_01818"/>
    </source>
</evidence>
<evidence type="ECO:0000269" key="2">
    <source>
    </source>
</evidence>
<evidence type="ECO:0000305" key="3"/>
<protein>
    <recommendedName>
        <fullName evidence="1">Ribonuclease Z</fullName>
        <shortName evidence="1">RNase Z</shortName>
        <ecNumber evidence="1">3.1.26.11</ecNumber>
    </recommendedName>
    <alternativeName>
        <fullName evidence="1">tRNA 3 endonuclease</fullName>
    </alternativeName>
    <alternativeName>
        <fullName evidence="1">tRNase Z</fullName>
    </alternativeName>
</protein>